<reference key="1">
    <citation type="submission" date="2008-05" db="EMBL/GenBank/DDBJ databases">
        <title>Genome sequence of Helicobacter pylori from the remote Amazon: traces of Asian ancestry of the first Americans.</title>
        <authorList>
            <person name="Kersulyte D."/>
            <person name="Kalia A."/>
            <person name="Gilman R.H."/>
            <person name="Berg D.E."/>
        </authorList>
    </citation>
    <scope>NUCLEOTIDE SEQUENCE [LARGE SCALE GENOMIC DNA]</scope>
    <source>
        <strain>Shi470</strain>
    </source>
</reference>
<evidence type="ECO:0000255" key="1">
    <source>
        <dbReference type="HAMAP-Rule" id="MF_01363"/>
    </source>
</evidence>
<evidence type="ECO:0000305" key="2"/>
<keyword id="KW-0687">Ribonucleoprotein</keyword>
<keyword id="KW-0689">Ribosomal protein</keyword>
<keyword id="KW-0694">RNA-binding</keyword>
<keyword id="KW-0699">rRNA-binding</keyword>
<protein>
    <recommendedName>
        <fullName evidence="1">Large ribosomal subunit protein bL21</fullName>
    </recommendedName>
    <alternativeName>
        <fullName evidence="2">50S ribosomal protein L21</fullName>
    </alternativeName>
</protein>
<proteinExistence type="inferred from homology"/>
<organism>
    <name type="scientific">Helicobacter pylori (strain Shi470)</name>
    <dbReference type="NCBI Taxonomy" id="512562"/>
    <lineage>
        <taxon>Bacteria</taxon>
        <taxon>Pseudomonadati</taxon>
        <taxon>Campylobacterota</taxon>
        <taxon>Epsilonproteobacteria</taxon>
        <taxon>Campylobacterales</taxon>
        <taxon>Helicobacteraceae</taxon>
        <taxon>Helicobacter</taxon>
    </lineage>
</organism>
<name>RL21_HELPS</name>
<comment type="function">
    <text evidence="1">This protein binds to 23S rRNA in the presence of protein L20.</text>
</comment>
<comment type="subunit">
    <text evidence="1">Part of the 50S ribosomal subunit. Contacts protein L20.</text>
</comment>
<comment type="similarity">
    <text evidence="1">Belongs to the bacterial ribosomal protein bL21 family.</text>
</comment>
<accession>B2USC7</accession>
<dbReference type="EMBL" id="CP001072">
    <property type="protein sequence ID" value="ACD47759.1"/>
    <property type="molecule type" value="Genomic_DNA"/>
</dbReference>
<dbReference type="RefSeq" id="WP_000119318.1">
    <property type="nucleotide sequence ID" value="NC_010698.2"/>
</dbReference>
<dbReference type="SMR" id="B2USC7"/>
<dbReference type="KEGG" id="hps:HPSH_01535"/>
<dbReference type="HOGENOM" id="CLU_061463_3_1_7"/>
<dbReference type="GO" id="GO:0005737">
    <property type="term" value="C:cytoplasm"/>
    <property type="evidence" value="ECO:0007669"/>
    <property type="project" value="UniProtKB-ARBA"/>
</dbReference>
<dbReference type="GO" id="GO:1990904">
    <property type="term" value="C:ribonucleoprotein complex"/>
    <property type="evidence" value="ECO:0007669"/>
    <property type="project" value="UniProtKB-KW"/>
</dbReference>
<dbReference type="GO" id="GO:0005840">
    <property type="term" value="C:ribosome"/>
    <property type="evidence" value="ECO:0007669"/>
    <property type="project" value="UniProtKB-KW"/>
</dbReference>
<dbReference type="GO" id="GO:0019843">
    <property type="term" value="F:rRNA binding"/>
    <property type="evidence" value="ECO:0007669"/>
    <property type="project" value="UniProtKB-UniRule"/>
</dbReference>
<dbReference type="GO" id="GO:0003735">
    <property type="term" value="F:structural constituent of ribosome"/>
    <property type="evidence" value="ECO:0007669"/>
    <property type="project" value="InterPro"/>
</dbReference>
<dbReference type="GO" id="GO:0006412">
    <property type="term" value="P:translation"/>
    <property type="evidence" value="ECO:0007669"/>
    <property type="project" value="UniProtKB-UniRule"/>
</dbReference>
<dbReference type="HAMAP" id="MF_01363">
    <property type="entry name" value="Ribosomal_bL21"/>
    <property type="match status" value="1"/>
</dbReference>
<dbReference type="InterPro" id="IPR028909">
    <property type="entry name" value="bL21-like"/>
</dbReference>
<dbReference type="InterPro" id="IPR036164">
    <property type="entry name" value="bL21-like_sf"/>
</dbReference>
<dbReference type="InterPro" id="IPR001787">
    <property type="entry name" value="Ribosomal_bL21"/>
</dbReference>
<dbReference type="InterPro" id="IPR018258">
    <property type="entry name" value="Ribosomal_bL21_CS"/>
</dbReference>
<dbReference type="NCBIfam" id="TIGR00061">
    <property type="entry name" value="L21"/>
    <property type="match status" value="1"/>
</dbReference>
<dbReference type="PANTHER" id="PTHR21349">
    <property type="entry name" value="50S RIBOSOMAL PROTEIN L21"/>
    <property type="match status" value="1"/>
</dbReference>
<dbReference type="PANTHER" id="PTHR21349:SF0">
    <property type="entry name" value="LARGE RIBOSOMAL SUBUNIT PROTEIN BL21M"/>
    <property type="match status" value="1"/>
</dbReference>
<dbReference type="Pfam" id="PF00829">
    <property type="entry name" value="Ribosomal_L21p"/>
    <property type="match status" value="1"/>
</dbReference>
<dbReference type="SUPFAM" id="SSF141091">
    <property type="entry name" value="L21p-like"/>
    <property type="match status" value="1"/>
</dbReference>
<dbReference type="PROSITE" id="PS01169">
    <property type="entry name" value="RIBOSOMAL_L21"/>
    <property type="match status" value="1"/>
</dbReference>
<gene>
    <name evidence="1" type="primary">rplU</name>
    <name type="ordered locus">HPSH_01535</name>
</gene>
<feature type="chain" id="PRO_1000143808" description="Large ribosomal subunit protein bL21">
    <location>
        <begin position="1"/>
        <end position="104"/>
    </location>
</feature>
<sequence>MSYAIFKHGGKQYKVVEGDIVLLDKMDKEPKALVELVEVLAVSKEGKLSCGKPFVNGAKIEAEVINEGRGKKVITFKKRRRKDSKTKRGFRRDFTRVRITKIVA</sequence>